<reference key="1">
    <citation type="submission" date="2007-06" db="EMBL/GenBank/DDBJ databases">
        <title>Complete sequence of Sinorhizobium medicae WSM419 chromosome.</title>
        <authorList>
            <consortium name="US DOE Joint Genome Institute"/>
            <person name="Copeland A."/>
            <person name="Lucas S."/>
            <person name="Lapidus A."/>
            <person name="Barry K."/>
            <person name="Glavina del Rio T."/>
            <person name="Dalin E."/>
            <person name="Tice H."/>
            <person name="Pitluck S."/>
            <person name="Chain P."/>
            <person name="Malfatti S."/>
            <person name="Shin M."/>
            <person name="Vergez L."/>
            <person name="Schmutz J."/>
            <person name="Larimer F."/>
            <person name="Land M."/>
            <person name="Hauser L."/>
            <person name="Kyrpides N."/>
            <person name="Mikhailova N."/>
            <person name="Reeve W.G."/>
            <person name="Richardson P."/>
        </authorList>
    </citation>
    <scope>NUCLEOTIDE SEQUENCE [LARGE SCALE GENOMIC DNA]</scope>
    <source>
        <strain>WSM419</strain>
    </source>
</reference>
<evidence type="ECO:0000255" key="1">
    <source>
        <dbReference type="HAMAP-Rule" id="MF_00049"/>
    </source>
</evidence>
<feature type="chain" id="PRO_1000009434" description="Leucine--tRNA ligase">
    <location>
        <begin position="1"/>
        <end position="876"/>
    </location>
</feature>
<feature type="short sequence motif" description="'HIGH' region">
    <location>
        <begin position="43"/>
        <end position="53"/>
    </location>
</feature>
<feature type="short sequence motif" description="'KMSKS' region">
    <location>
        <begin position="632"/>
        <end position="636"/>
    </location>
</feature>
<feature type="binding site" evidence="1">
    <location>
        <position position="635"/>
    </location>
    <ligand>
        <name>ATP</name>
        <dbReference type="ChEBI" id="CHEBI:30616"/>
    </ligand>
</feature>
<accession>A6UEE2</accession>
<name>SYL_SINMW</name>
<organism>
    <name type="scientific">Sinorhizobium medicae (strain WSM419)</name>
    <name type="common">Ensifer medicae</name>
    <dbReference type="NCBI Taxonomy" id="366394"/>
    <lineage>
        <taxon>Bacteria</taxon>
        <taxon>Pseudomonadati</taxon>
        <taxon>Pseudomonadota</taxon>
        <taxon>Alphaproteobacteria</taxon>
        <taxon>Hyphomicrobiales</taxon>
        <taxon>Rhizobiaceae</taxon>
        <taxon>Sinorhizobium/Ensifer group</taxon>
        <taxon>Sinorhizobium</taxon>
    </lineage>
</organism>
<proteinExistence type="inferred from homology"/>
<keyword id="KW-0030">Aminoacyl-tRNA synthetase</keyword>
<keyword id="KW-0067">ATP-binding</keyword>
<keyword id="KW-0963">Cytoplasm</keyword>
<keyword id="KW-0436">Ligase</keyword>
<keyword id="KW-0547">Nucleotide-binding</keyword>
<keyword id="KW-0648">Protein biosynthesis</keyword>
<gene>
    <name evidence="1" type="primary">leuS</name>
    <name type="ordered locus">Smed_3198</name>
</gene>
<dbReference type="EC" id="6.1.1.4" evidence="1"/>
<dbReference type="EMBL" id="CP000738">
    <property type="protein sequence ID" value="ABR62022.1"/>
    <property type="molecule type" value="Genomic_DNA"/>
</dbReference>
<dbReference type="RefSeq" id="WP_012067403.1">
    <property type="nucleotide sequence ID" value="NC_009636.1"/>
</dbReference>
<dbReference type="RefSeq" id="YP_001328857.1">
    <property type="nucleotide sequence ID" value="NC_009636.1"/>
</dbReference>
<dbReference type="SMR" id="A6UEE2"/>
<dbReference type="STRING" id="366394.Smed_3198"/>
<dbReference type="GeneID" id="61610780"/>
<dbReference type="KEGG" id="smd:Smed_3198"/>
<dbReference type="PATRIC" id="fig|366394.8.peg.6436"/>
<dbReference type="eggNOG" id="COG0495">
    <property type="taxonomic scope" value="Bacteria"/>
</dbReference>
<dbReference type="HOGENOM" id="CLU_004427_0_0_5"/>
<dbReference type="OrthoDB" id="9810365at2"/>
<dbReference type="Proteomes" id="UP000001108">
    <property type="component" value="Chromosome"/>
</dbReference>
<dbReference type="GO" id="GO:0005829">
    <property type="term" value="C:cytosol"/>
    <property type="evidence" value="ECO:0007669"/>
    <property type="project" value="TreeGrafter"/>
</dbReference>
<dbReference type="GO" id="GO:0002161">
    <property type="term" value="F:aminoacyl-tRNA deacylase activity"/>
    <property type="evidence" value="ECO:0007669"/>
    <property type="project" value="InterPro"/>
</dbReference>
<dbReference type="GO" id="GO:0005524">
    <property type="term" value="F:ATP binding"/>
    <property type="evidence" value="ECO:0007669"/>
    <property type="project" value="UniProtKB-UniRule"/>
</dbReference>
<dbReference type="GO" id="GO:0004823">
    <property type="term" value="F:leucine-tRNA ligase activity"/>
    <property type="evidence" value="ECO:0007669"/>
    <property type="project" value="UniProtKB-UniRule"/>
</dbReference>
<dbReference type="GO" id="GO:0006429">
    <property type="term" value="P:leucyl-tRNA aminoacylation"/>
    <property type="evidence" value="ECO:0007669"/>
    <property type="project" value="UniProtKB-UniRule"/>
</dbReference>
<dbReference type="CDD" id="cd07958">
    <property type="entry name" value="Anticodon_Ia_Leu_BEm"/>
    <property type="match status" value="1"/>
</dbReference>
<dbReference type="CDD" id="cd00812">
    <property type="entry name" value="LeuRS_core"/>
    <property type="match status" value="1"/>
</dbReference>
<dbReference type="FunFam" id="1.10.730.10:FF:000002">
    <property type="entry name" value="Leucine--tRNA ligase"/>
    <property type="match status" value="1"/>
</dbReference>
<dbReference type="FunFam" id="3.40.50.620:FF:000003">
    <property type="entry name" value="Leucine--tRNA ligase"/>
    <property type="match status" value="1"/>
</dbReference>
<dbReference type="Gene3D" id="2.20.28.290">
    <property type="match status" value="1"/>
</dbReference>
<dbReference type="Gene3D" id="3.10.20.590">
    <property type="match status" value="1"/>
</dbReference>
<dbReference type="Gene3D" id="3.40.50.620">
    <property type="entry name" value="HUPs"/>
    <property type="match status" value="2"/>
</dbReference>
<dbReference type="Gene3D" id="1.10.730.10">
    <property type="entry name" value="Isoleucyl-tRNA Synthetase, Domain 1"/>
    <property type="match status" value="2"/>
</dbReference>
<dbReference type="Gene3D" id="3.90.740.10">
    <property type="entry name" value="Valyl/Leucyl/Isoleucyl-tRNA synthetase, editing domain"/>
    <property type="match status" value="1"/>
</dbReference>
<dbReference type="HAMAP" id="MF_00049_B">
    <property type="entry name" value="Leu_tRNA_synth_B"/>
    <property type="match status" value="1"/>
</dbReference>
<dbReference type="InterPro" id="IPR001412">
    <property type="entry name" value="aa-tRNA-synth_I_CS"/>
</dbReference>
<dbReference type="InterPro" id="IPR002300">
    <property type="entry name" value="aa-tRNA-synth_Ia"/>
</dbReference>
<dbReference type="InterPro" id="IPR002302">
    <property type="entry name" value="Leu-tRNA-ligase"/>
</dbReference>
<dbReference type="InterPro" id="IPR025709">
    <property type="entry name" value="Leu_tRNA-synth_edit"/>
</dbReference>
<dbReference type="InterPro" id="IPR013155">
    <property type="entry name" value="M/V/L/I-tRNA-synth_anticd-bd"/>
</dbReference>
<dbReference type="InterPro" id="IPR015413">
    <property type="entry name" value="Methionyl/Leucyl_tRNA_Synth"/>
</dbReference>
<dbReference type="InterPro" id="IPR014729">
    <property type="entry name" value="Rossmann-like_a/b/a_fold"/>
</dbReference>
<dbReference type="InterPro" id="IPR009080">
    <property type="entry name" value="tRNAsynth_Ia_anticodon-bd"/>
</dbReference>
<dbReference type="InterPro" id="IPR009008">
    <property type="entry name" value="Val/Leu/Ile-tRNA-synth_edit"/>
</dbReference>
<dbReference type="NCBIfam" id="TIGR00396">
    <property type="entry name" value="leuS_bact"/>
    <property type="match status" value="1"/>
</dbReference>
<dbReference type="PANTHER" id="PTHR43740:SF2">
    <property type="entry name" value="LEUCINE--TRNA LIGASE, MITOCHONDRIAL"/>
    <property type="match status" value="1"/>
</dbReference>
<dbReference type="PANTHER" id="PTHR43740">
    <property type="entry name" value="LEUCYL-TRNA SYNTHETASE"/>
    <property type="match status" value="1"/>
</dbReference>
<dbReference type="Pfam" id="PF08264">
    <property type="entry name" value="Anticodon_1"/>
    <property type="match status" value="1"/>
</dbReference>
<dbReference type="Pfam" id="PF00133">
    <property type="entry name" value="tRNA-synt_1"/>
    <property type="match status" value="2"/>
</dbReference>
<dbReference type="Pfam" id="PF13603">
    <property type="entry name" value="tRNA-synt_1_2"/>
    <property type="match status" value="1"/>
</dbReference>
<dbReference type="Pfam" id="PF09334">
    <property type="entry name" value="tRNA-synt_1g"/>
    <property type="match status" value="1"/>
</dbReference>
<dbReference type="PRINTS" id="PR00985">
    <property type="entry name" value="TRNASYNTHLEU"/>
</dbReference>
<dbReference type="SUPFAM" id="SSF47323">
    <property type="entry name" value="Anticodon-binding domain of a subclass of class I aminoacyl-tRNA synthetases"/>
    <property type="match status" value="1"/>
</dbReference>
<dbReference type="SUPFAM" id="SSF52374">
    <property type="entry name" value="Nucleotidylyl transferase"/>
    <property type="match status" value="1"/>
</dbReference>
<dbReference type="SUPFAM" id="SSF50677">
    <property type="entry name" value="ValRS/IleRS/LeuRS editing domain"/>
    <property type="match status" value="1"/>
</dbReference>
<dbReference type="PROSITE" id="PS00178">
    <property type="entry name" value="AA_TRNA_LIGASE_I"/>
    <property type="match status" value="1"/>
</dbReference>
<protein>
    <recommendedName>
        <fullName evidence="1">Leucine--tRNA ligase</fullName>
        <ecNumber evidence="1">6.1.1.4</ecNumber>
    </recommendedName>
    <alternativeName>
        <fullName evidence="1">Leucyl-tRNA synthetase</fullName>
        <shortName evidence="1">LeuRS</shortName>
    </alternativeName>
</protein>
<sequence>MATERYNPRDAEPRWQQQWEAGKIFETKNDDPREKYYVLEMFPYPSGRIHMGHVRNYTMGDVVARYKRARGFNVLHPMGWDAFGMPAENAAMERGVHPASWTYQNIASMKAQLKVMGLSLDWSREFATCDPEYYQRQQHLFLDFLEKGLVYRKQSKVNWDPVDNTVLANEQVIDGRGWRSGALVEQRELTQWFFRITDFSQDLLDSLDTLDEWPEKVRLMQKNWIGRSEGLSVRWELDPATVPGEEKELTVYTTRPDTLFGASFLAISADHPLARDAAAKSAEIEAFCEECRRAGTSLAALETAEKMGIDTGIRARHPFDPDWELPVYVANFVLMDYGTGAIFGCPSGDQRDLDFARKYGLPVVPVVMPKDADPQTFTIGDEAYVGDGVMINSRFLDGLSTEEAFETIATRLEKDLLNGTPRAERKVNFRLRDWGISRQRYWGCPIPVIHCDDCGVVPVPKTDLPVTLPPDVTFDKPGNPLDRHPTWRHVACPQCGKDARRETDTMDTFVDSSWYFTRFTAPWEDGPTDPKAANHWLPVDQYIGGIEHAILHLLYSRFFTRAMKATGHVALDEPFKGLFTQGMVVHETYSRGEGAQREWITPAEIRIEEADGQRRAVHIETSEEIAIGSIEKMSKSKKNVVDPDDIIASYGADTARFFVLSDSPPDRDVIWSEAGVEGAHRFVQRVWRLLSEAAEGLSAAEAAPAREGEGLAVSQAAHRTLKAVEADYDKLAFNKAVARIYELVNTLAAPLAQIAAGKADQALTAAVKDAAGILISLIAPMMPHLAEECWRAIGGKGLIAERPWPKFDATLVVENEITLPVQINGKKRADLTIARDADQSAIESAVLALDVVKTALNGSNPKKIIVVPQRIVNVVV</sequence>
<comment type="catalytic activity">
    <reaction evidence="1">
        <text>tRNA(Leu) + L-leucine + ATP = L-leucyl-tRNA(Leu) + AMP + diphosphate</text>
        <dbReference type="Rhea" id="RHEA:11688"/>
        <dbReference type="Rhea" id="RHEA-COMP:9613"/>
        <dbReference type="Rhea" id="RHEA-COMP:9622"/>
        <dbReference type="ChEBI" id="CHEBI:30616"/>
        <dbReference type="ChEBI" id="CHEBI:33019"/>
        <dbReference type="ChEBI" id="CHEBI:57427"/>
        <dbReference type="ChEBI" id="CHEBI:78442"/>
        <dbReference type="ChEBI" id="CHEBI:78494"/>
        <dbReference type="ChEBI" id="CHEBI:456215"/>
        <dbReference type="EC" id="6.1.1.4"/>
    </reaction>
</comment>
<comment type="subcellular location">
    <subcellularLocation>
        <location evidence="1">Cytoplasm</location>
    </subcellularLocation>
</comment>
<comment type="similarity">
    <text evidence="1">Belongs to the class-I aminoacyl-tRNA synthetase family.</text>
</comment>